<evidence type="ECO:0000250" key="1"/>
<evidence type="ECO:0000255" key="2"/>
<evidence type="ECO:0000256" key="3">
    <source>
        <dbReference type="SAM" id="MobiDB-lite"/>
    </source>
</evidence>
<evidence type="ECO:0000305" key="4"/>
<accession>Q4W9R7</accession>
<reference key="1">
    <citation type="submission" date="2006-03" db="EMBL/GenBank/DDBJ databases">
        <title>Phosphoethanolamine transferases gene, AfpigN, which is involved in the biosynthesis of glycosylphosphatidylinositol in Aspergillus fumigatus YJ407.</title>
        <authorList>
            <person name="Ouyang H."/>
            <person name="Jin C."/>
        </authorList>
    </citation>
    <scope>NUCLEOTIDE SEQUENCE [MRNA]</scope>
    <source>
        <strain>YJ-407</strain>
    </source>
</reference>
<reference key="2">
    <citation type="journal article" date="2005" name="Nature">
        <title>Genomic sequence of the pathogenic and allergenic filamentous fungus Aspergillus fumigatus.</title>
        <authorList>
            <person name="Nierman W.C."/>
            <person name="Pain A."/>
            <person name="Anderson M.J."/>
            <person name="Wortman J.R."/>
            <person name="Kim H.S."/>
            <person name="Arroyo J."/>
            <person name="Berriman M."/>
            <person name="Abe K."/>
            <person name="Archer D.B."/>
            <person name="Bermejo C."/>
            <person name="Bennett J.W."/>
            <person name="Bowyer P."/>
            <person name="Chen D."/>
            <person name="Collins M."/>
            <person name="Coulsen R."/>
            <person name="Davies R."/>
            <person name="Dyer P.S."/>
            <person name="Farman M.L."/>
            <person name="Fedorova N."/>
            <person name="Fedorova N.D."/>
            <person name="Feldblyum T.V."/>
            <person name="Fischer R."/>
            <person name="Fosker N."/>
            <person name="Fraser A."/>
            <person name="Garcia J.L."/>
            <person name="Garcia M.J."/>
            <person name="Goble A."/>
            <person name="Goldman G.H."/>
            <person name="Gomi K."/>
            <person name="Griffith-Jones S."/>
            <person name="Gwilliam R."/>
            <person name="Haas B.J."/>
            <person name="Haas H."/>
            <person name="Harris D.E."/>
            <person name="Horiuchi H."/>
            <person name="Huang J."/>
            <person name="Humphray S."/>
            <person name="Jimenez J."/>
            <person name="Keller N."/>
            <person name="Khouri H."/>
            <person name="Kitamoto K."/>
            <person name="Kobayashi T."/>
            <person name="Konzack S."/>
            <person name="Kulkarni R."/>
            <person name="Kumagai T."/>
            <person name="Lafton A."/>
            <person name="Latge J.-P."/>
            <person name="Li W."/>
            <person name="Lord A."/>
            <person name="Lu C."/>
            <person name="Majoros W.H."/>
            <person name="May G.S."/>
            <person name="Miller B.L."/>
            <person name="Mohamoud Y."/>
            <person name="Molina M."/>
            <person name="Monod M."/>
            <person name="Mouyna I."/>
            <person name="Mulligan S."/>
            <person name="Murphy L.D."/>
            <person name="O'Neil S."/>
            <person name="Paulsen I."/>
            <person name="Penalva M.A."/>
            <person name="Pertea M."/>
            <person name="Price C."/>
            <person name="Pritchard B.L."/>
            <person name="Quail M.A."/>
            <person name="Rabbinowitsch E."/>
            <person name="Rawlins N."/>
            <person name="Rajandream M.A."/>
            <person name="Reichard U."/>
            <person name="Renauld H."/>
            <person name="Robson G.D."/>
            <person name="Rodriguez de Cordoba S."/>
            <person name="Rodriguez-Pena J.M."/>
            <person name="Ronning C.M."/>
            <person name="Rutter S."/>
            <person name="Salzberg S.L."/>
            <person name="Sanchez M."/>
            <person name="Sanchez-Ferrero J.C."/>
            <person name="Saunders D."/>
            <person name="Seeger K."/>
            <person name="Squares R."/>
            <person name="Squares S."/>
            <person name="Takeuchi M."/>
            <person name="Tekaia F."/>
            <person name="Turner G."/>
            <person name="Vazquez de Aldana C.R."/>
            <person name="Weidman J."/>
            <person name="White O."/>
            <person name="Woodward J.R."/>
            <person name="Yu J.-H."/>
            <person name="Fraser C.M."/>
            <person name="Galagan J.E."/>
            <person name="Asai K."/>
            <person name="Machida M."/>
            <person name="Hall N."/>
            <person name="Barrell B.G."/>
            <person name="Denning D.W."/>
        </authorList>
    </citation>
    <scope>NUCLEOTIDE SEQUENCE [LARGE SCALE GENOMIC DNA]</scope>
    <source>
        <strain>ATCC MYA-4609 / CBS 101355 / FGSC A1100 / Af293</strain>
    </source>
</reference>
<keyword id="KW-0961">Cell wall biogenesis/degradation</keyword>
<keyword id="KW-0256">Endoplasmic reticulum</keyword>
<keyword id="KW-0325">Glycoprotein</keyword>
<keyword id="KW-0337">GPI-anchor biosynthesis</keyword>
<keyword id="KW-0472">Membrane</keyword>
<keyword id="KW-1185">Reference proteome</keyword>
<keyword id="KW-0808">Transferase</keyword>
<keyword id="KW-0812">Transmembrane</keyword>
<keyword id="KW-1133">Transmembrane helix</keyword>
<proteinExistence type="evidence at transcript level"/>
<name>MCD4_ASPFU</name>
<feature type="chain" id="PRO_0000246201" description="GPI ethanolamine phosphate transferase 1">
    <location>
        <begin position="1"/>
        <end position="1032"/>
    </location>
</feature>
<feature type="topological domain" description="Cytoplasmic" evidence="2">
    <location>
        <begin position="1"/>
        <end position="6"/>
    </location>
</feature>
<feature type="transmembrane region" description="Helical" evidence="2">
    <location>
        <begin position="7"/>
        <end position="27"/>
    </location>
</feature>
<feature type="topological domain" description="Lumenal" evidence="2">
    <location>
        <begin position="28"/>
        <end position="468"/>
    </location>
</feature>
<feature type="transmembrane region" description="Helical" evidence="2">
    <location>
        <begin position="469"/>
        <end position="489"/>
    </location>
</feature>
<feature type="topological domain" description="Cytoplasmic" evidence="2">
    <location>
        <begin position="490"/>
        <end position="500"/>
    </location>
</feature>
<feature type="transmembrane region" description="Helical" evidence="2">
    <location>
        <begin position="501"/>
        <end position="521"/>
    </location>
</feature>
<feature type="topological domain" description="Lumenal" evidence="2">
    <location>
        <begin position="522"/>
        <end position="523"/>
    </location>
</feature>
<feature type="transmembrane region" description="Helical" evidence="2">
    <location>
        <begin position="524"/>
        <end position="544"/>
    </location>
</feature>
<feature type="topological domain" description="Cytoplasmic" evidence="2">
    <location>
        <begin position="545"/>
        <end position="564"/>
    </location>
</feature>
<feature type="transmembrane region" description="Helical" evidence="2">
    <location>
        <begin position="565"/>
        <end position="585"/>
    </location>
</feature>
<feature type="topological domain" description="Lumenal" evidence="2">
    <location>
        <begin position="586"/>
        <end position="596"/>
    </location>
</feature>
<feature type="transmembrane region" description="Helical" evidence="2">
    <location>
        <begin position="597"/>
        <end position="617"/>
    </location>
</feature>
<feature type="topological domain" description="Cytoplasmic" evidence="2">
    <location>
        <begin position="618"/>
        <end position="622"/>
    </location>
</feature>
<feature type="transmembrane region" description="Helical" evidence="2">
    <location>
        <begin position="623"/>
        <end position="643"/>
    </location>
</feature>
<feature type="topological domain" description="Lumenal" evidence="2">
    <location>
        <begin position="644"/>
        <end position="647"/>
    </location>
</feature>
<feature type="transmembrane region" description="Helical" evidence="2">
    <location>
        <begin position="648"/>
        <end position="668"/>
    </location>
</feature>
<feature type="topological domain" description="Cytoplasmic" evidence="2">
    <location>
        <begin position="669"/>
        <end position="688"/>
    </location>
</feature>
<feature type="transmembrane region" description="Helical" evidence="2">
    <location>
        <begin position="689"/>
        <end position="709"/>
    </location>
</feature>
<feature type="topological domain" description="Lumenal" evidence="2">
    <location>
        <begin position="710"/>
        <end position="722"/>
    </location>
</feature>
<feature type="transmembrane region" description="Helical" evidence="2">
    <location>
        <begin position="723"/>
        <end position="743"/>
    </location>
</feature>
<feature type="topological domain" description="Cytoplasmic" evidence="2">
    <location>
        <begin position="744"/>
        <end position="766"/>
    </location>
</feature>
<feature type="transmembrane region" description="Helical" evidence="2">
    <location>
        <begin position="767"/>
        <end position="787"/>
    </location>
</feature>
<feature type="topological domain" description="Lumenal" evidence="2">
    <location>
        <begin position="788"/>
        <end position="841"/>
    </location>
</feature>
<feature type="transmembrane region" description="Helical" evidence="2">
    <location>
        <begin position="842"/>
        <end position="862"/>
    </location>
</feature>
<feature type="topological domain" description="Cytoplasmic" evidence="2">
    <location>
        <begin position="863"/>
        <end position="884"/>
    </location>
</feature>
<feature type="transmembrane region" description="Helical" evidence="2">
    <location>
        <begin position="885"/>
        <end position="905"/>
    </location>
</feature>
<feature type="topological domain" description="Lumenal" evidence="2">
    <location>
        <begin position="906"/>
        <end position="914"/>
    </location>
</feature>
<feature type="transmembrane region" description="Helical" evidence="2">
    <location>
        <begin position="915"/>
        <end position="935"/>
    </location>
</feature>
<feature type="topological domain" description="Cytoplasmic" evidence="2">
    <location>
        <begin position="936"/>
        <end position="951"/>
    </location>
</feature>
<feature type="transmembrane region" description="Helical" evidence="2">
    <location>
        <begin position="952"/>
        <end position="972"/>
    </location>
</feature>
<feature type="topological domain" description="Lumenal" evidence="2">
    <location>
        <begin position="973"/>
        <end position="1032"/>
    </location>
</feature>
<feature type="region of interest" description="Disordered" evidence="3">
    <location>
        <begin position="994"/>
        <end position="1032"/>
    </location>
</feature>
<feature type="glycosylation site" description="N-linked (GlcNAc...) asparagine" evidence="2">
    <location>
        <position position="150"/>
    </location>
</feature>
<feature type="glycosylation site" description="N-linked (GlcNAc...) asparagine" evidence="2">
    <location>
        <position position="435"/>
    </location>
</feature>
<feature type="glycosylation site" description="N-linked (GlcNAc...) asparagine" evidence="2">
    <location>
        <position position="810"/>
    </location>
</feature>
<feature type="glycosylation site" description="N-linked (GlcNAc...) asparagine" evidence="2">
    <location>
        <position position="820"/>
    </location>
</feature>
<comment type="function">
    <text evidence="1">Ethanolamine phosphate transferase involved in glycosylphosphatidylinositol-anchor biosynthesis. Transfers ethanolamine phosphate to the first alpha-1,4-linked mannose of the glycosylphosphatidylinositol precursor of GPI-anchor (By similarity).</text>
</comment>
<comment type="pathway">
    <text>Glycolipid biosynthesis; glycosylphosphatidylinositol-anchor biosynthesis.</text>
</comment>
<comment type="subcellular location">
    <subcellularLocation>
        <location evidence="1">Endoplasmic reticulum membrane</location>
        <topology evidence="1">Multi-pass membrane protein</topology>
    </subcellularLocation>
</comment>
<comment type="similarity">
    <text evidence="4">Belongs to the PIGG/PIGN/PIGO family. PIGN subfamily.</text>
</comment>
<gene>
    <name type="primary">mcd4</name>
    <name type="synonym">pigN</name>
    <name type="ORF">AFUA_4G03970</name>
</gene>
<sequence>MARLGRFGFLALAVVFHLIYAYSIFDIYFVSPIVSGMRSYGVEREPGAKAPASRLVLFVADGLRADKAFQPAPDPSPEDGEDAENNDPIYLAPFIRSRVLSHGTFGVSHTRVPTESRPGHVALIAGLYEDVSAVTTGWKLNPVNFDSVFNQSRHTWSWGSPDILAMFKEGAVPGRVDADMYGEEIEDFTMDATQLDTWVFNKVKELFASAKSDPELDAKLRQDKVVFFLHLLGLDTTGHGYRPYSREYLHNIKIVDKGVQEIATLIEEFYGDDRTAFVFTADHGMSDWGSHGDGHPDNTRTPLVVWGSGVAGPKYTDGKAVTGHEDGFSADWGLDGIQRHDVAQADVAALMAYLAGLDFPVNSVGQLPLEYIDASPKEKALAALANTQEVLEMYRVKEAQKRAALLRYKPFEPLADHGKNSVEEHIAEIQVLIANGSYDEPIKRSGALFATALEGLRYLQTYDWLFLRTIITFGYLGWIAYALTTVIDLHVLHRTSDSKRTVGSTIFFTSILAALFSVLLYQKSSWQYYVYGAFPIFFWEEVFARRKALIAGREILLGHVRSFGGYIASGFQLVAFVAVLEALLMRHQVQSYFHREIYTVCFVLGSFWPILYGVDFVRQNTVLSATWAVGCSLMSTFTLLPVIKVENINTITYGALLMFFTGLFYLLFEDTILKHSKSSGHAPGAISSLGSRVIMGMQVGMVLLALIVTRSSVSSLQAKQGLPFGNQVVGWFVLVASLVLPFFHRLYPNSHYLHRLMVLFLTFSPTFIILTISYEGLFYFVFCMTLVTWVRLEHAIYVYTARSSAHYGGNNTVPKKPGLNATAVIDGQEYRYRRLGLADTRVALFFFFLLQSAFFSTGNIASVSSFSLESVFRLIPVFSPFSQSALLILKLLIPFAIISANLGILNRRLEVAPSALFMVVMSISDVMTLNFFYMVRDEGSWLDIGTTISHFLIASFLCTFVAGLEFLSEVFISGVDFGPTTKAIGASITKTVGGTAGSDVVDSQSGPEDAANSKKAEGLEGSETIRQNGGSV</sequence>
<organism>
    <name type="scientific">Aspergillus fumigatus (strain ATCC MYA-4609 / CBS 101355 / FGSC A1100 / Af293)</name>
    <name type="common">Neosartorya fumigata</name>
    <dbReference type="NCBI Taxonomy" id="330879"/>
    <lineage>
        <taxon>Eukaryota</taxon>
        <taxon>Fungi</taxon>
        <taxon>Dikarya</taxon>
        <taxon>Ascomycota</taxon>
        <taxon>Pezizomycotina</taxon>
        <taxon>Eurotiomycetes</taxon>
        <taxon>Eurotiomycetidae</taxon>
        <taxon>Eurotiales</taxon>
        <taxon>Aspergillaceae</taxon>
        <taxon>Aspergillus</taxon>
        <taxon>Aspergillus subgen. Fumigati</taxon>
    </lineage>
</organism>
<dbReference type="EC" id="2.-.-.-"/>
<dbReference type="EMBL" id="DQ426542">
    <property type="protein sequence ID" value="ABD84043.1"/>
    <property type="molecule type" value="mRNA"/>
</dbReference>
<dbReference type="EMBL" id="AAHF01000016">
    <property type="protein sequence ID" value="EAL84546.1"/>
    <property type="molecule type" value="Genomic_DNA"/>
</dbReference>
<dbReference type="RefSeq" id="XP_746584.1">
    <property type="nucleotide sequence ID" value="XM_741491.1"/>
</dbReference>
<dbReference type="SMR" id="Q4W9R7"/>
<dbReference type="FunCoup" id="Q4W9R7">
    <property type="interactions" value="489"/>
</dbReference>
<dbReference type="STRING" id="330879.Q4W9R7"/>
<dbReference type="GlyCosmos" id="Q4W9R7">
    <property type="glycosylation" value="4 sites, No reported glycans"/>
</dbReference>
<dbReference type="EnsemblFungi" id="EAL84546">
    <property type="protein sequence ID" value="EAL84546"/>
    <property type="gene ID" value="AFUA_4G03970"/>
</dbReference>
<dbReference type="GeneID" id="3503916"/>
<dbReference type="KEGG" id="afm:AFUA_4G03970"/>
<dbReference type="eggNOG" id="KOG2124">
    <property type="taxonomic scope" value="Eukaryota"/>
</dbReference>
<dbReference type="HOGENOM" id="CLU_007676_0_0_1"/>
<dbReference type="InParanoid" id="Q4W9R7"/>
<dbReference type="OMA" id="QSYFHRE"/>
<dbReference type="OrthoDB" id="2748310at2759"/>
<dbReference type="UniPathway" id="UPA00196"/>
<dbReference type="Proteomes" id="UP000002530">
    <property type="component" value="Chromosome 4"/>
</dbReference>
<dbReference type="GO" id="GO:0005789">
    <property type="term" value="C:endoplasmic reticulum membrane"/>
    <property type="evidence" value="ECO:0000318"/>
    <property type="project" value="GO_Central"/>
</dbReference>
<dbReference type="GO" id="GO:0051377">
    <property type="term" value="F:mannose-ethanolamine phosphotransferase activity"/>
    <property type="evidence" value="ECO:0000318"/>
    <property type="project" value="GO_Central"/>
</dbReference>
<dbReference type="GO" id="GO:0071555">
    <property type="term" value="P:cell wall organization"/>
    <property type="evidence" value="ECO:0007669"/>
    <property type="project" value="UniProtKB-KW"/>
</dbReference>
<dbReference type="GO" id="GO:0006506">
    <property type="term" value="P:GPI anchor biosynthetic process"/>
    <property type="evidence" value="ECO:0000318"/>
    <property type="project" value="GO_Central"/>
</dbReference>
<dbReference type="CDD" id="cd16020">
    <property type="entry name" value="GPI_EPT_1"/>
    <property type="match status" value="1"/>
</dbReference>
<dbReference type="FunFam" id="3.40.720.10:FF:000015">
    <property type="entry name" value="GPI ethanolamine phosphate transferase 1"/>
    <property type="match status" value="1"/>
</dbReference>
<dbReference type="Gene3D" id="3.40.720.10">
    <property type="entry name" value="Alkaline Phosphatase, subunit A"/>
    <property type="match status" value="1"/>
</dbReference>
<dbReference type="InterPro" id="IPR017850">
    <property type="entry name" value="Alkaline_phosphatase_core_sf"/>
</dbReference>
<dbReference type="InterPro" id="IPR007070">
    <property type="entry name" value="GPI_EtnP_transferase_1"/>
</dbReference>
<dbReference type="InterPro" id="IPR017852">
    <property type="entry name" value="GPI_EtnP_transferase_1_C"/>
</dbReference>
<dbReference type="InterPro" id="IPR002591">
    <property type="entry name" value="Phosphodiest/P_Trfase"/>
</dbReference>
<dbReference type="InterPro" id="IPR037671">
    <property type="entry name" value="PIGN_N"/>
</dbReference>
<dbReference type="PANTHER" id="PTHR12250:SF0">
    <property type="entry name" value="GPI ETHANOLAMINE PHOSPHATE TRANSFERASE 1"/>
    <property type="match status" value="1"/>
</dbReference>
<dbReference type="PANTHER" id="PTHR12250">
    <property type="entry name" value="PHOSPHATIDYLINOSITOL GLYCAN, CLASS N"/>
    <property type="match status" value="1"/>
</dbReference>
<dbReference type="Pfam" id="PF01663">
    <property type="entry name" value="Phosphodiest"/>
    <property type="match status" value="1"/>
</dbReference>
<dbReference type="Pfam" id="PF04987">
    <property type="entry name" value="PigN"/>
    <property type="match status" value="1"/>
</dbReference>
<dbReference type="SUPFAM" id="SSF53649">
    <property type="entry name" value="Alkaline phosphatase-like"/>
    <property type="match status" value="1"/>
</dbReference>
<protein>
    <recommendedName>
        <fullName>GPI ethanolamine phosphate transferase 1</fullName>
        <ecNumber>2.-.-.-</ecNumber>
    </recommendedName>
    <alternativeName>
        <fullName>AfpigN</fullName>
    </alternativeName>
</protein>